<accession>Q8ZH66</accession>
<accession>Q0WI01</accession>
<accession>Q8CZZ0</accession>
<organism>
    <name type="scientific">Yersinia pestis</name>
    <dbReference type="NCBI Taxonomy" id="632"/>
    <lineage>
        <taxon>Bacteria</taxon>
        <taxon>Pseudomonadati</taxon>
        <taxon>Pseudomonadota</taxon>
        <taxon>Gammaproteobacteria</taxon>
        <taxon>Enterobacterales</taxon>
        <taxon>Yersiniaceae</taxon>
        <taxon>Yersinia</taxon>
    </lineage>
</organism>
<dbReference type="EMBL" id="AL590842">
    <property type="protein sequence ID" value="CAL19709.1"/>
    <property type="molecule type" value="Genomic_DNA"/>
</dbReference>
<dbReference type="EMBL" id="AE009952">
    <property type="protein sequence ID" value="AAM86687.1"/>
    <property type="status" value="ALT_INIT"/>
    <property type="molecule type" value="Genomic_DNA"/>
</dbReference>
<dbReference type="EMBL" id="AE017042">
    <property type="protein sequence ID" value="AAS62991.1"/>
    <property type="status" value="ALT_INIT"/>
    <property type="molecule type" value="Genomic_DNA"/>
</dbReference>
<dbReference type="PIR" id="AC0128">
    <property type="entry name" value="AC0128"/>
</dbReference>
<dbReference type="RefSeq" id="WP_002221800.1">
    <property type="nucleotide sequence ID" value="NZ_WUCM01000044.1"/>
</dbReference>
<dbReference type="RefSeq" id="YP_002346087.1">
    <property type="nucleotide sequence ID" value="NC_003143.1"/>
</dbReference>
<dbReference type="SMR" id="Q8ZH66"/>
<dbReference type="STRING" id="214092.YPO1044"/>
<dbReference type="PaxDb" id="214092-YPO1044"/>
<dbReference type="EnsemblBacteria" id="AAS62991">
    <property type="protein sequence ID" value="AAS62991"/>
    <property type="gene ID" value="YP_2807"/>
</dbReference>
<dbReference type="GeneID" id="57977517"/>
<dbReference type="KEGG" id="ype:YPO1044"/>
<dbReference type="KEGG" id="ypk:y3137"/>
<dbReference type="KEGG" id="ypm:YP_2807"/>
<dbReference type="PATRIC" id="fig|214092.21.peg.1332"/>
<dbReference type="eggNOG" id="COG0052">
    <property type="taxonomic scope" value="Bacteria"/>
</dbReference>
<dbReference type="HOGENOM" id="CLU_040318_1_0_6"/>
<dbReference type="OMA" id="PYIFMEK"/>
<dbReference type="OrthoDB" id="9808036at2"/>
<dbReference type="Proteomes" id="UP000000815">
    <property type="component" value="Chromosome"/>
</dbReference>
<dbReference type="Proteomes" id="UP000001019">
    <property type="component" value="Chromosome"/>
</dbReference>
<dbReference type="Proteomes" id="UP000002490">
    <property type="component" value="Chromosome"/>
</dbReference>
<dbReference type="GO" id="GO:0022627">
    <property type="term" value="C:cytosolic small ribosomal subunit"/>
    <property type="evidence" value="ECO:0000318"/>
    <property type="project" value="GO_Central"/>
</dbReference>
<dbReference type="GO" id="GO:0003735">
    <property type="term" value="F:structural constituent of ribosome"/>
    <property type="evidence" value="ECO:0000318"/>
    <property type="project" value="GO_Central"/>
</dbReference>
<dbReference type="GO" id="GO:0006412">
    <property type="term" value="P:translation"/>
    <property type="evidence" value="ECO:0007669"/>
    <property type="project" value="UniProtKB-UniRule"/>
</dbReference>
<dbReference type="CDD" id="cd01425">
    <property type="entry name" value="RPS2"/>
    <property type="match status" value="1"/>
</dbReference>
<dbReference type="FunFam" id="1.10.287.610:FF:000001">
    <property type="entry name" value="30S ribosomal protein S2"/>
    <property type="match status" value="1"/>
</dbReference>
<dbReference type="Gene3D" id="3.40.50.10490">
    <property type="entry name" value="Glucose-6-phosphate isomerase like protein, domain 1"/>
    <property type="match status" value="1"/>
</dbReference>
<dbReference type="Gene3D" id="1.10.287.610">
    <property type="entry name" value="Helix hairpin bin"/>
    <property type="match status" value="1"/>
</dbReference>
<dbReference type="HAMAP" id="MF_00291_B">
    <property type="entry name" value="Ribosomal_uS2_B"/>
    <property type="match status" value="1"/>
</dbReference>
<dbReference type="InterPro" id="IPR001865">
    <property type="entry name" value="Ribosomal_uS2"/>
</dbReference>
<dbReference type="InterPro" id="IPR005706">
    <property type="entry name" value="Ribosomal_uS2_bac/mit/plastid"/>
</dbReference>
<dbReference type="InterPro" id="IPR018130">
    <property type="entry name" value="Ribosomal_uS2_CS"/>
</dbReference>
<dbReference type="InterPro" id="IPR023591">
    <property type="entry name" value="Ribosomal_uS2_flav_dom_sf"/>
</dbReference>
<dbReference type="NCBIfam" id="TIGR01011">
    <property type="entry name" value="rpsB_bact"/>
    <property type="match status" value="1"/>
</dbReference>
<dbReference type="PANTHER" id="PTHR12534">
    <property type="entry name" value="30S RIBOSOMAL PROTEIN S2 PROKARYOTIC AND ORGANELLAR"/>
    <property type="match status" value="1"/>
</dbReference>
<dbReference type="PANTHER" id="PTHR12534:SF0">
    <property type="entry name" value="SMALL RIBOSOMAL SUBUNIT PROTEIN US2M"/>
    <property type="match status" value="1"/>
</dbReference>
<dbReference type="Pfam" id="PF00318">
    <property type="entry name" value="Ribosomal_S2"/>
    <property type="match status" value="1"/>
</dbReference>
<dbReference type="PRINTS" id="PR00395">
    <property type="entry name" value="RIBOSOMALS2"/>
</dbReference>
<dbReference type="SUPFAM" id="SSF52313">
    <property type="entry name" value="Ribosomal protein S2"/>
    <property type="match status" value="1"/>
</dbReference>
<dbReference type="PROSITE" id="PS00962">
    <property type="entry name" value="RIBOSOMAL_S2_1"/>
    <property type="match status" value="1"/>
</dbReference>
<dbReference type="PROSITE" id="PS00963">
    <property type="entry name" value="RIBOSOMAL_S2_2"/>
    <property type="match status" value="1"/>
</dbReference>
<evidence type="ECO:0000255" key="1">
    <source>
        <dbReference type="HAMAP-Rule" id="MF_00291"/>
    </source>
</evidence>
<evidence type="ECO:0000305" key="2"/>
<reference key="1">
    <citation type="journal article" date="2001" name="Nature">
        <title>Genome sequence of Yersinia pestis, the causative agent of plague.</title>
        <authorList>
            <person name="Parkhill J."/>
            <person name="Wren B.W."/>
            <person name="Thomson N.R."/>
            <person name="Titball R.W."/>
            <person name="Holden M.T.G."/>
            <person name="Prentice M.B."/>
            <person name="Sebaihia M."/>
            <person name="James K.D."/>
            <person name="Churcher C.M."/>
            <person name="Mungall K.L."/>
            <person name="Baker S."/>
            <person name="Basham D."/>
            <person name="Bentley S.D."/>
            <person name="Brooks K."/>
            <person name="Cerdeno-Tarraga A.-M."/>
            <person name="Chillingworth T."/>
            <person name="Cronin A."/>
            <person name="Davies R.M."/>
            <person name="Davis P."/>
            <person name="Dougan G."/>
            <person name="Feltwell T."/>
            <person name="Hamlin N."/>
            <person name="Holroyd S."/>
            <person name="Jagels K."/>
            <person name="Karlyshev A.V."/>
            <person name="Leather S."/>
            <person name="Moule S."/>
            <person name="Oyston P.C.F."/>
            <person name="Quail M.A."/>
            <person name="Rutherford K.M."/>
            <person name="Simmonds M."/>
            <person name="Skelton J."/>
            <person name="Stevens K."/>
            <person name="Whitehead S."/>
            <person name="Barrell B.G."/>
        </authorList>
    </citation>
    <scope>NUCLEOTIDE SEQUENCE [LARGE SCALE GENOMIC DNA]</scope>
    <source>
        <strain>CO-92 / Biovar Orientalis</strain>
    </source>
</reference>
<reference key="2">
    <citation type="journal article" date="2002" name="J. Bacteriol.">
        <title>Genome sequence of Yersinia pestis KIM.</title>
        <authorList>
            <person name="Deng W."/>
            <person name="Burland V."/>
            <person name="Plunkett G. III"/>
            <person name="Boutin A."/>
            <person name="Mayhew G.F."/>
            <person name="Liss P."/>
            <person name="Perna N.T."/>
            <person name="Rose D.J."/>
            <person name="Mau B."/>
            <person name="Zhou S."/>
            <person name="Schwartz D.C."/>
            <person name="Fetherston J.D."/>
            <person name="Lindler L.E."/>
            <person name="Brubaker R.R."/>
            <person name="Plano G.V."/>
            <person name="Straley S.C."/>
            <person name="McDonough K.A."/>
            <person name="Nilles M.L."/>
            <person name="Matson J.S."/>
            <person name="Blattner F.R."/>
            <person name="Perry R.D."/>
        </authorList>
    </citation>
    <scope>NUCLEOTIDE SEQUENCE [LARGE SCALE GENOMIC DNA]</scope>
    <source>
        <strain>KIM10+ / Biovar Mediaevalis</strain>
    </source>
</reference>
<reference key="3">
    <citation type="journal article" date="2004" name="DNA Res.">
        <title>Complete genome sequence of Yersinia pestis strain 91001, an isolate avirulent to humans.</title>
        <authorList>
            <person name="Song Y."/>
            <person name="Tong Z."/>
            <person name="Wang J."/>
            <person name="Wang L."/>
            <person name="Guo Z."/>
            <person name="Han Y."/>
            <person name="Zhang J."/>
            <person name="Pei D."/>
            <person name="Zhou D."/>
            <person name="Qin H."/>
            <person name="Pang X."/>
            <person name="Han Y."/>
            <person name="Zhai J."/>
            <person name="Li M."/>
            <person name="Cui B."/>
            <person name="Qi Z."/>
            <person name="Jin L."/>
            <person name="Dai R."/>
            <person name="Chen F."/>
            <person name="Li S."/>
            <person name="Ye C."/>
            <person name="Du Z."/>
            <person name="Lin W."/>
            <person name="Wang J."/>
            <person name="Yu J."/>
            <person name="Yang H."/>
            <person name="Wang J."/>
            <person name="Huang P."/>
            <person name="Yang R."/>
        </authorList>
    </citation>
    <scope>NUCLEOTIDE SEQUENCE [LARGE SCALE GENOMIC DNA]</scope>
    <source>
        <strain>91001 / Biovar Mediaevalis</strain>
    </source>
</reference>
<keyword id="KW-1185">Reference proteome</keyword>
<keyword id="KW-0687">Ribonucleoprotein</keyword>
<keyword id="KW-0689">Ribosomal protein</keyword>
<feature type="chain" id="PRO_0000134282" description="Small ribosomal subunit protein uS2">
    <location>
        <begin position="1"/>
        <end position="241"/>
    </location>
</feature>
<sequence length="241" mass="26841">MATVSMRDMLQAGVHFGHQTRYWNPKMKPFIFGARNKVHIINLEKTVPMFNEALAELTKISSRKGKILFVGTKRAASEAVKEAANNCDQFFVNHRWLGGMLTNWKTVRQSIKRLKDLEIQSQDGTFDKLTKKEALMRTRELNKLENSLGGIKDMGGLPDALFVVDADHEHIAIKEANNLGIPVFSIVDTNSDPDGVDFIIPGNDDAIRAVKLYLGAVATAVREGRSQDLAVQAEESFVEAE</sequence>
<protein>
    <recommendedName>
        <fullName evidence="1">Small ribosomal subunit protein uS2</fullName>
    </recommendedName>
    <alternativeName>
        <fullName evidence="2">30S ribosomal protein S2</fullName>
    </alternativeName>
</protein>
<gene>
    <name evidence="1" type="primary">rpsB</name>
    <name type="ordered locus">YPO1044</name>
    <name type="ordered locus">y3137</name>
    <name type="ordered locus">YP_2807</name>
</gene>
<comment type="similarity">
    <text evidence="1">Belongs to the universal ribosomal protein uS2 family.</text>
</comment>
<comment type="sequence caution" evidence="2">
    <conflict type="erroneous initiation">
        <sequence resource="EMBL-CDS" id="AAM86687"/>
    </conflict>
</comment>
<comment type="sequence caution" evidence="2">
    <conflict type="erroneous initiation">
        <sequence resource="EMBL-CDS" id="AAS62991"/>
    </conflict>
</comment>
<proteinExistence type="inferred from homology"/>
<name>RS2_YERPE</name>